<reference key="1">
    <citation type="submission" date="1995-05" db="EMBL/GenBank/DDBJ databases">
        <authorList>
            <person name="Smith D.R."/>
            <person name="Robison K."/>
        </authorList>
    </citation>
    <scope>NUCLEOTIDE SEQUENCE [GENOMIC DNA]</scope>
</reference>
<reference key="2">
    <citation type="journal article" date="2001" name="Nature">
        <title>Massive gene decay in the leprosy bacillus.</title>
        <authorList>
            <person name="Cole S.T."/>
            <person name="Eiglmeier K."/>
            <person name="Parkhill J."/>
            <person name="James K.D."/>
            <person name="Thomson N.R."/>
            <person name="Wheeler P.R."/>
            <person name="Honore N."/>
            <person name="Garnier T."/>
            <person name="Churcher C.M."/>
            <person name="Harris D.E."/>
            <person name="Mungall K.L."/>
            <person name="Basham D."/>
            <person name="Brown D."/>
            <person name="Chillingworth T."/>
            <person name="Connor R."/>
            <person name="Davies R.M."/>
            <person name="Devlin K."/>
            <person name="Duthoy S."/>
            <person name="Feltwell T."/>
            <person name="Fraser A."/>
            <person name="Hamlin N."/>
            <person name="Holroyd S."/>
            <person name="Hornsby T."/>
            <person name="Jagels K."/>
            <person name="Lacroix C."/>
            <person name="Maclean J."/>
            <person name="Moule S."/>
            <person name="Murphy L.D."/>
            <person name="Oliver K."/>
            <person name="Quail M.A."/>
            <person name="Rajandream M.A."/>
            <person name="Rutherford K.M."/>
            <person name="Rutter S."/>
            <person name="Seeger K."/>
            <person name="Simon S."/>
            <person name="Simmonds M."/>
            <person name="Skelton J."/>
            <person name="Squares R."/>
            <person name="Squares S."/>
            <person name="Stevens K."/>
            <person name="Taylor K."/>
            <person name="Whitehead S."/>
            <person name="Woodward J.R."/>
            <person name="Barrell B.G."/>
        </authorList>
    </citation>
    <scope>NUCLEOTIDE SEQUENCE [LARGE SCALE GENOMIC DNA]</scope>
    <source>
        <strain>TN</strain>
    </source>
</reference>
<accession>P53382</accession>
<comment type="function">
    <text evidence="1">Binds and transfers iron-sulfur (Fe-S) clusters to target apoproteins. Can hydrolyze ATP.</text>
</comment>
<comment type="subunit">
    <text evidence="1">Homodimer.</text>
</comment>
<comment type="similarity">
    <text evidence="2">In the N-terminal section; belongs to the MIP18 family.</text>
</comment>
<comment type="similarity">
    <text evidence="2">In the C-terminal section; belongs to the Mrp/NBP35 ATP-binding proteins family.</text>
</comment>
<comment type="sequence caution" evidence="2">
    <conflict type="erroneous initiation">
        <sequence resource="EMBL-CDS" id="AAA62909"/>
    </conflict>
</comment>
<evidence type="ECO:0000255" key="1">
    <source>
        <dbReference type="HAMAP-Rule" id="MF_02040"/>
    </source>
</evidence>
<evidence type="ECO:0000305" key="2"/>
<gene>
    <name type="primary">mrp</name>
    <name type="ordered locus">ML1080</name>
</gene>
<sequence length="383" mass="40544">MSRTDRNAADLKSAVSTALAKVIDPELQRPITELGMVKNIDIEPGGNVQVGIYLTIASCPKKSEISKRVTKAIADVPGTAAVEVSLDVMSDEQRTKLRKKLRGDAREPMIPFAQPNSLTRVYTVASGKGGVGKSTVTVNLATAIAARGLAVGVLDADIHGHSIPRMMGSNQRPIQLESMILPPIVHEVKVISIGQFTEGNTPVIWRGPMLHRALQQFLSDVYWGDLDVLMLDLPPGTGDIAISVAQLIPNAEILVVTTPQLAAAEVAERAGSIALQTRQRIVGVVENMSGLMMPDGSRLQVFGEGGGQQVAERLSRAVGTDVPLLGQIPLDPALVAAGDSGIPIVLNASDSPVGKELLRIADGLSSRQRRLAGVSLGLDPSRR</sequence>
<keyword id="KW-0067">ATP-binding</keyword>
<keyword id="KW-0378">Hydrolase</keyword>
<keyword id="KW-0408">Iron</keyword>
<keyword id="KW-0411">Iron-sulfur</keyword>
<keyword id="KW-0479">Metal-binding</keyword>
<keyword id="KW-0547">Nucleotide-binding</keyword>
<keyword id="KW-1185">Reference proteome</keyword>
<name>APBC_MYCLE</name>
<proteinExistence type="inferred from homology"/>
<dbReference type="EMBL" id="U15180">
    <property type="protein sequence ID" value="AAA62909.1"/>
    <property type="status" value="ALT_INIT"/>
    <property type="molecule type" value="Genomic_DNA"/>
</dbReference>
<dbReference type="EMBL" id="AL583920">
    <property type="protein sequence ID" value="CAC31461.1"/>
    <property type="molecule type" value="Genomic_DNA"/>
</dbReference>
<dbReference type="PIR" id="B87044">
    <property type="entry name" value="B87044"/>
</dbReference>
<dbReference type="PIR" id="T45199">
    <property type="entry name" value="T45199"/>
</dbReference>
<dbReference type="RefSeq" id="NP_301793.1">
    <property type="nucleotide sequence ID" value="NC_002677.1"/>
</dbReference>
<dbReference type="RefSeq" id="WP_010908117.1">
    <property type="nucleotide sequence ID" value="NC_002677.1"/>
</dbReference>
<dbReference type="SMR" id="P53382"/>
<dbReference type="STRING" id="272631.gene:17574906"/>
<dbReference type="KEGG" id="mle:ML1080"/>
<dbReference type="PATRIC" id="fig|272631.5.peg.1934"/>
<dbReference type="Leproma" id="ML1080"/>
<dbReference type="eggNOG" id="COG0489">
    <property type="taxonomic scope" value="Bacteria"/>
</dbReference>
<dbReference type="eggNOG" id="COG2151">
    <property type="taxonomic scope" value="Bacteria"/>
</dbReference>
<dbReference type="HOGENOM" id="CLU_024839_0_0_11"/>
<dbReference type="OrthoDB" id="9809679at2"/>
<dbReference type="Proteomes" id="UP000000806">
    <property type="component" value="Chromosome"/>
</dbReference>
<dbReference type="GO" id="GO:0051539">
    <property type="term" value="F:4 iron, 4 sulfur cluster binding"/>
    <property type="evidence" value="ECO:0007669"/>
    <property type="project" value="TreeGrafter"/>
</dbReference>
<dbReference type="GO" id="GO:0005524">
    <property type="term" value="F:ATP binding"/>
    <property type="evidence" value="ECO:0007669"/>
    <property type="project" value="UniProtKB-UniRule"/>
</dbReference>
<dbReference type="GO" id="GO:0016887">
    <property type="term" value="F:ATP hydrolysis activity"/>
    <property type="evidence" value="ECO:0007669"/>
    <property type="project" value="UniProtKB-UniRule"/>
</dbReference>
<dbReference type="GO" id="GO:0140663">
    <property type="term" value="F:ATP-dependent FeS chaperone activity"/>
    <property type="evidence" value="ECO:0007669"/>
    <property type="project" value="InterPro"/>
</dbReference>
<dbReference type="GO" id="GO:0046872">
    <property type="term" value="F:metal ion binding"/>
    <property type="evidence" value="ECO:0007669"/>
    <property type="project" value="UniProtKB-KW"/>
</dbReference>
<dbReference type="GO" id="GO:0016226">
    <property type="term" value="P:iron-sulfur cluster assembly"/>
    <property type="evidence" value="ECO:0007669"/>
    <property type="project" value="InterPro"/>
</dbReference>
<dbReference type="CDD" id="cd02037">
    <property type="entry name" value="Mrp_NBP35"/>
    <property type="match status" value="1"/>
</dbReference>
<dbReference type="FunFam" id="3.40.50.300:FF:000304">
    <property type="entry name" value="Iron-sulfur cluster carrier protein"/>
    <property type="match status" value="1"/>
</dbReference>
<dbReference type="Gene3D" id="3.30.300.130">
    <property type="entry name" value="Fe-S cluster assembly (FSCA)"/>
    <property type="match status" value="1"/>
</dbReference>
<dbReference type="Gene3D" id="3.40.50.300">
    <property type="entry name" value="P-loop containing nucleotide triphosphate hydrolases"/>
    <property type="match status" value="1"/>
</dbReference>
<dbReference type="HAMAP" id="MF_02040">
    <property type="entry name" value="Mrp_NBP35"/>
    <property type="match status" value="1"/>
</dbReference>
<dbReference type="InterPro" id="IPR034904">
    <property type="entry name" value="FSCA_dom_sf"/>
</dbReference>
<dbReference type="InterPro" id="IPR002744">
    <property type="entry name" value="MIP18-like"/>
</dbReference>
<dbReference type="InterPro" id="IPR000808">
    <property type="entry name" value="Mrp-like_CS"/>
</dbReference>
<dbReference type="InterPro" id="IPR019591">
    <property type="entry name" value="Mrp/NBP35_ATP-bd"/>
</dbReference>
<dbReference type="InterPro" id="IPR044304">
    <property type="entry name" value="NUBPL-like"/>
</dbReference>
<dbReference type="InterPro" id="IPR027417">
    <property type="entry name" value="P-loop_NTPase"/>
</dbReference>
<dbReference type="InterPro" id="IPR033756">
    <property type="entry name" value="YlxH/NBP35"/>
</dbReference>
<dbReference type="PANTHER" id="PTHR42961">
    <property type="entry name" value="IRON-SULFUR PROTEIN NUBPL"/>
    <property type="match status" value="1"/>
</dbReference>
<dbReference type="PANTHER" id="PTHR42961:SF2">
    <property type="entry name" value="IRON-SULFUR PROTEIN NUBPL"/>
    <property type="match status" value="1"/>
</dbReference>
<dbReference type="Pfam" id="PF01883">
    <property type="entry name" value="FeS_assembly_P"/>
    <property type="match status" value="1"/>
</dbReference>
<dbReference type="Pfam" id="PF10609">
    <property type="entry name" value="ParA"/>
    <property type="match status" value="1"/>
</dbReference>
<dbReference type="SUPFAM" id="SSF117916">
    <property type="entry name" value="Fe-S cluster assembly (FSCA) domain-like"/>
    <property type="match status" value="1"/>
</dbReference>
<dbReference type="SUPFAM" id="SSF52540">
    <property type="entry name" value="P-loop containing nucleoside triphosphate hydrolases"/>
    <property type="match status" value="1"/>
</dbReference>
<dbReference type="PROSITE" id="PS01215">
    <property type="entry name" value="MRP"/>
    <property type="match status" value="1"/>
</dbReference>
<organism>
    <name type="scientific">Mycobacterium leprae (strain TN)</name>
    <dbReference type="NCBI Taxonomy" id="272631"/>
    <lineage>
        <taxon>Bacteria</taxon>
        <taxon>Bacillati</taxon>
        <taxon>Actinomycetota</taxon>
        <taxon>Actinomycetes</taxon>
        <taxon>Mycobacteriales</taxon>
        <taxon>Mycobacteriaceae</taxon>
        <taxon>Mycobacterium</taxon>
    </lineage>
</organism>
<protein>
    <recommendedName>
        <fullName evidence="1">Iron-sulfur cluster carrier protein</fullName>
    </recommendedName>
</protein>
<feature type="chain" id="PRO_0000184937" description="Iron-sulfur cluster carrier protein">
    <location>
        <begin position="1"/>
        <end position="383"/>
    </location>
</feature>
<feature type="binding site" evidence="1">
    <location>
        <begin position="127"/>
        <end position="134"/>
    </location>
    <ligand>
        <name>ATP</name>
        <dbReference type="ChEBI" id="CHEBI:30616"/>
    </ligand>
</feature>